<gene>
    <name evidence="1" type="primary">murD</name>
    <name type="ordered locus">lpp2669</name>
</gene>
<feature type="chain" id="PRO_0000109033" description="UDP-N-acetylmuramoylalanine--D-glutamate ligase">
    <location>
        <begin position="1"/>
        <end position="447"/>
    </location>
</feature>
<feature type="binding site" evidence="1">
    <location>
        <begin position="112"/>
        <end position="118"/>
    </location>
    <ligand>
        <name>ATP</name>
        <dbReference type="ChEBI" id="CHEBI:30616"/>
    </ligand>
</feature>
<accession>Q5X1S4</accession>
<name>MURD_LEGPA</name>
<evidence type="ECO:0000255" key="1">
    <source>
        <dbReference type="HAMAP-Rule" id="MF_00639"/>
    </source>
</evidence>
<reference key="1">
    <citation type="journal article" date="2004" name="Nat. Genet.">
        <title>Evidence in the Legionella pneumophila genome for exploitation of host cell functions and high genome plasticity.</title>
        <authorList>
            <person name="Cazalet C."/>
            <person name="Rusniok C."/>
            <person name="Brueggemann H."/>
            <person name="Zidane N."/>
            <person name="Magnier A."/>
            <person name="Ma L."/>
            <person name="Tichit M."/>
            <person name="Jarraud S."/>
            <person name="Bouchier C."/>
            <person name="Vandenesch F."/>
            <person name="Kunst F."/>
            <person name="Etienne J."/>
            <person name="Glaser P."/>
            <person name="Buchrieser C."/>
        </authorList>
    </citation>
    <scope>NUCLEOTIDE SEQUENCE [LARGE SCALE GENOMIC DNA]</scope>
    <source>
        <strain>Paris</strain>
    </source>
</reference>
<comment type="function">
    <text evidence="1">Cell wall formation. Catalyzes the addition of glutamate to the nucleotide precursor UDP-N-acetylmuramoyl-L-alanine (UMA).</text>
</comment>
<comment type="catalytic activity">
    <reaction evidence="1">
        <text>UDP-N-acetyl-alpha-D-muramoyl-L-alanine + D-glutamate + ATP = UDP-N-acetyl-alpha-D-muramoyl-L-alanyl-D-glutamate + ADP + phosphate + H(+)</text>
        <dbReference type="Rhea" id="RHEA:16429"/>
        <dbReference type="ChEBI" id="CHEBI:15378"/>
        <dbReference type="ChEBI" id="CHEBI:29986"/>
        <dbReference type="ChEBI" id="CHEBI:30616"/>
        <dbReference type="ChEBI" id="CHEBI:43474"/>
        <dbReference type="ChEBI" id="CHEBI:83898"/>
        <dbReference type="ChEBI" id="CHEBI:83900"/>
        <dbReference type="ChEBI" id="CHEBI:456216"/>
        <dbReference type="EC" id="6.3.2.9"/>
    </reaction>
</comment>
<comment type="pathway">
    <text evidence="1">Cell wall biogenesis; peptidoglycan biosynthesis.</text>
</comment>
<comment type="subcellular location">
    <subcellularLocation>
        <location evidence="1">Cytoplasm</location>
    </subcellularLocation>
</comment>
<comment type="similarity">
    <text evidence="1">Belongs to the MurCDEF family.</text>
</comment>
<proteinExistence type="inferred from homology"/>
<keyword id="KW-0067">ATP-binding</keyword>
<keyword id="KW-0131">Cell cycle</keyword>
<keyword id="KW-0132">Cell division</keyword>
<keyword id="KW-0133">Cell shape</keyword>
<keyword id="KW-0961">Cell wall biogenesis/degradation</keyword>
<keyword id="KW-0963">Cytoplasm</keyword>
<keyword id="KW-0436">Ligase</keyword>
<keyword id="KW-0547">Nucleotide-binding</keyword>
<keyword id="KW-0573">Peptidoglycan synthesis</keyword>
<organism>
    <name type="scientific">Legionella pneumophila (strain Paris)</name>
    <dbReference type="NCBI Taxonomy" id="297246"/>
    <lineage>
        <taxon>Bacteria</taxon>
        <taxon>Pseudomonadati</taxon>
        <taxon>Pseudomonadota</taxon>
        <taxon>Gammaproteobacteria</taxon>
        <taxon>Legionellales</taxon>
        <taxon>Legionellaceae</taxon>
        <taxon>Legionella</taxon>
    </lineage>
</organism>
<protein>
    <recommendedName>
        <fullName evidence="1">UDP-N-acetylmuramoylalanine--D-glutamate ligase</fullName>
        <ecNumber evidence="1">6.3.2.9</ecNumber>
    </recommendedName>
    <alternativeName>
        <fullName evidence="1">D-glutamic acid-adding enzyme</fullName>
    </alternativeName>
    <alternativeName>
        <fullName evidence="1">UDP-N-acetylmuramoyl-L-alanyl-D-glutamate synthetase</fullName>
    </alternativeName>
</protein>
<sequence>MNHSLYLVAGLGKTGLSIARYLKRNNKSFVVFDTRKEAPGLAEFQNEFPDVPIYLQQTPDEVISQVTDVITSPGLALDTPVLERARQAGASIYGDIECLAREISAPVIAITGTNGKSTVTTLVGEMAKAAGFRVAVAGNIGTPVLDMLDDEHHYDLWVLELSSFQLDLTYSLSPVVATILNVTPDHLDRHHTMEAYTQAKQRIYRGAKAVLFNREDVYTVPHQSCQTDIKCISFGKDAPSMGNWGLIEQENTTYLAKGMERLLPVESILIKGVHNWMNALAACALAEAAGISMQHILNVLKTFPGLPHRCQWVREVDGVGWINDSKGTNIGATISAINGIGGSMQGKIVLIAGGQGKGADFQELAQPVSEFVRSIVLIGEDADKIESALAKVVPVVRASSLEGAVTIAKTCAKPGDVVLLSPACASLDMFRDFNHRGDVFTSSVRGL</sequence>
<dbReference type="EC" id="6.3.2.9" evidence="1"/>
<dbReference type="EMBL" id="CR628336">
    <property type="protein sequence ID" value="CAH13822.1"/>
    <property type="molecule type" value="Genomic_DNA"/>
</dbReference>
<dbReference type="RefSeq" id="WP_015961707.1">
    <property type="nucleotide sequence ID" value="NC_006368.1"/>
</dbReference>
<dbReference type="SMR" id="Q5X1S4"/>
<dbReference type="KEGG" id="lpp:lpp2669"/>
<dbReference type="LegioList" id="lpp2669"/>
<dbReference type="HOGENOM" id="CLU_032540_1_0_6"/>
<dbReference type="UniPathway" id="UPA00219"/>
<dbReference type="GO" id="GO:0005737">
    <property type="term" value="C:cytoplasm"/>
    <property type="evidence" value="ECO:0007669"/>
    <property type="project" value="UniProtKB-SubCell"/>
</dbReference>
<dbReference type="GO" id="GO:0005524">
    <property type="term" value="F:ATP binding"/>
    <property type="evidence" value="ECO:0007669"/>
    <property type="project" value="UniProtKB-UniRule"/>
</dbReference>
<dbReference type="GO" id="GO:0008764">
    <property type="term" value="F:UDP-N-acetylmuramoylalanine-D-glutamate ligase activity"/>
    <property type="evidence" value="ECO:0007669"/>
    <property type="project" value="UniProtKB-UniRule"/>
</dbReference>
<dbReference type="GO" id="GO:0051301">
    <property type="term" value="P:cell division"/>
    <property type="evidence" value="ECO:0007669"/>
    <property type="project" value="UniProtKB-KW"/>
</dbReference>
<dbReference type="GO" id="GO:0071555">
    <property type="term" value="P:cell wall organization"/>
    <property type="evidence" value="ECO:0007669"/>
    <property type="project" value="UniProtKB-KW"/>
</dbReference>
<dbReference type="GO" id="GO:0009252">
    <property type="term" value="P:peptidoglycan biosynthetic process"/>
    <property type="evidence" value="ECO:0007669"/>
    <property type="project" value="UniProtKB-UniRule"/>
</dbReference>
<dbReference type="GO" id="GO:0008360">
    <property type="term" value="P:regulation of cell shape"/>
    <property type="evidence" value="ECO:0007669"/>
    <property type="project" value="UniProtKB-KW"/>
</dbReference>
<dbReference type="Gene3D" id="3.90.190.20">
    <property type="entry name" value="Mur ligase, C-terminal domain"/>
    <property type="match status" value="1"/>
</dbReference>
<dbReference type="Gene3D" id="3.40.1190.10">
    <property type="entry name" value="Mur-like, catalytic domain"/>
    <property type="match status" value="1"/>
</dbReference>
<dbReference type="Gene3D" id="3.40.50.720">
    <property type="entry name" value="NAD(P)-binding Rossmann-like Domain"/>
    <property type="match status" value="1"/>
</dbReference>
<dbReference type="HAMAP" id="MF_00639">
    <property type="entry name" value="MurD"/>
    <property type="match status" value="1"/>
</dbReference>
<dbReference type="InterPro" id="IPR036565">
    <property type="entry name" value="Mur-like_cat_sf"/>
</dbReference>
<dbReference type="InterPro" id="IPR004101">
    <property type="entry name" value="Mur_ligase_C"/>
</dbReference>
<dbReference type="InterPro" id="IPR036615">
    <property type="entry name" value="Mur_ligase_C_dom_sf"/>
</dbReference>
<dbReference type="InterPro" id="IPR013221">
    <property type="entry name" value="Mur_ligase_cen"/>
</dbReference>
<dbReference type="InterPro" id="IPR005762">
    <property type="entry name" value="MurD"/>
</dbReference>
<dbReference type="NCBIfam" id="TIGR01087">
    <property type="entry name" value="murD"/>
    <property type="match status" value="1"/>
</dbReference>
<dbReference type="PANTHER" id="PTHR43692">
    <property type="entry name" value="UDP-N-ACETYLMURAMOYLALANINE--D-GLUTAMATE LIGASE"/>
    <property type="match status" value="1"/>
</dbReference>
<dbReference type="PANTHER" id="PTHR43692:SF1">
    <property type="entry name" value="UDP-N-ACETYLMURAMOYLALANINE--D-GLUTAMATE LIGASE"/>
    <property type="match status" value="1"/>
</dbReference>
<dbReference type="Pfam" id="PF02875">
    <property type="entry name" value="Mur_ligase_C"/>
    <property type="match status" value="1"/>
</dbReference>
<dbReference type="Pfam" id="PF08245">
    <property type="entry name" value="Mur_ligase_M"/>
    <property type="match status" value="1"/>
</dbReference>
<dbReference type="Pfam" id="PF21799">
    <property type="entry name" value="MurD-like_N"/>
    <property type="match status" value="1"/>
</dbReference>
<dbReference type="SUPFAM" id="SSF51984">
    <property type="entry name" value="MurCD N-terminal domain"/>
    <property type="match status" value="1"/>
</dbReference>
<dbReference type="SUPFAM" id="SSF53623">
    <property type="entry name" value="MurD-like peptide ligases, catalytic domain"/>
    <property type="match status" value="1"/>
</dbReference>
<dbReference type="SUPFAM" id="SSF53244">
    <property type="entry name" value="MurD-like peptide ligases, peptide-binding domain"/>
    <property type="match status" value="1"/>
</dbReference>